<reference key="1">
    <citation type="journal article" date="2004" name="Nature">
        <title>Genome sequence of Silicibacter pomeroyi reveals adaptations to the marine environment.</title>
        <authorList>
            <person name="Moran M.A."/>
            <person name="Buchan A."/>
            <person name="Gonzalez J.M."/>
            <person name="Heidelberg J.F."/>
            <person name="Whitman W.B."/>
            <person name="Kiene R.P."/>
            <person name="Henriksen J.R."/>
            <person name="King G.M."/>
            <person name="Belas R."/>
            <person name="Fuqua C."/>
            <person name="Brinkac L.M."/>
            <person name="Lewis M."/>
            <person name="Johri S."/>
            <person name="Weaver B."/>
            <person name="Pai G."/>
            <person name="Eisen J.A."/>
            <person name="Rahe E."/>
            <person name="Sheldon W.M."/>
            <person name="Ye W."/>
            <person name="Miller T.R."/>
            <person name="Carlton J."/>
            <person name="Rasko D.A."/>
            <person name="Paulsen I.T."/>
            <person name="Ren Q."/>
            <person name="Daugherty S.C."/>
            <person name="DeBoy R.T."/>
            <person name="Dodson R.J."/>
            <person name="Durkin A.S."/>
            <person name="Madupu R."/>
            <person name="Nelson W.C."/>
            <person name="Sullivan S.A."/>
            <person name="Rosovitz M.J."/>
            <person name="Haft D.H."/>
            <person name="Selengut J."/>
            <person name="Ward N."/>
        </authorList>
    </citation>
    <scope>NUCLEOTIDE SEQUENCE [LARGE SCALE GENOMIC DNA]</scope>
    <source>
        <strain>ATCC 700808 / DSM 15171 / DSS-3</strain>
    </source>
</reference>
<reference key="2">
    <citation type="journal article" date="2014" name="Stand. Genomic Sci.">
        <title>An updated genome annotation for the model marine bacterium Ruegeria pomeroyi DSS-3.</title>
        <authorList>
            <person name="Rivers A.R."/>
            <person name="Smith C.B."/>
            <person name="Moran M.A."/>
        </authorList>
    </citation>
    <scope>GENOME REANNOTATION</scope>
    <source>
        <strain>ATCC 700808 / DSM 15171 / DSS-3</strain>
    </source>
</reference>
<protein>
    <recommendedName>
        <fullName evidence="1">ATP-dependent Clp protease ATP-binding subunit ClpX</fullName>
    </recommendedName>
</protein>
<name>CLPX_RUEPO</name>
<keyword id="KW-0067">ATP-binding</keyword>
<keyword id="KW-0143">Chaperone</keyword>
<keyword id="KW-0479">Metal-binding</keyword>
<keyword id="KW-0547">Nucleotide-binding</keyword>
<keyword id="KW-1185">Reference proteome</keyword>
<keyword id="KW-0862">Zinc</keyword>
<feature type="chain" id="PRO_1000024664" description="ATP-dependent Clp protease ATP-binding subunit ClpX">
    <location>
        <begin position="1"/>
        <end position="422"/>
    </location>
</feature>
<feature type="domain" description="ClpX-type ZB" evidence="2">
    <location>
        <begin position="3"/>
        <end position="56"/>
    </location>
</feature>
<feature type="binding site" evidence="2">
    <location>
        <position position="15"/>
    </location>
    <ligand>
        <name>Zn(2+)</name>
        <dbReference type="ChEBI" id="CHEBI:29105"/>
    </ligand>
</feature>
<feature type="binding site" evidence="2">
    <location>
        <position position="18"/>
    </location>
    <ligand>
        <name>Zn(2+)</name>
        <dbReference type="ChEBI" id="CHEBI:29105"/>
    </ligand>
</feature>
<feature type="binding site" evidence="2">
    <location>
        <position position="37"/>
    </location>
    <ligand>
        <name>Zn(2+)</name>
        <dbReference type="ChEBI" id="CHEBI:29105"/>
    </ligand>
</feature>
<feature type="binding site" evidence="2">
    <location>
        <position position="40"/>
    </location>
    <ligand>
        <name>Zn(2+)</name>
        <dbReference type="ChEBI" id="CHEBI:29105"/>
    </ligand>
</feature>
<feature type="binding site" evidence="1">
    <location>
        <begin position="120"/>
        <end position="127"/>
    </location>
    <ligand>
        <name>ATP</name>
        <dbReference type="ChEBI" id="CHEBI:30616"/>
    </ligand>
</feature>
<sequence>MATNSGGDSKNTLYCSFCGKSQHEVRKLIAGPTVFICDECVELCMDIIREETKSSSLKSSDGVPTPRDICDVLDDYVIGQSTAKRVLSVAVHNHYKRLNHAQKAGSDIELAKSNILLIGPTGCGKTLLAQTLARILDVPFTMADATTLTEAGYVGEDVENIILKLLQASEYNVERAQRGIVYIDEVDKITRKSENPSITRDVSGEGVQQALLKLMEGTVASVPPQGGRKHPQQEFLQVDTTNILFICGGAFAGLDKIIAQRGKGSAMGFGADVRASDERGVGELFTELEPEDLLKFGLIPEFVGRLPVLATLEDLDEDALVTILTKPKNALVKQYQRLFELEDTELDFTDDALKAIAKRAIERKTGARGLRSIMEDILLDTMFDLPSMDNVTKVVVNEEAVTSDAQPLLIYADAEKGSASAG</sequence>
<evidence type="ECO:0000255" key="1">
    <source>
        <dbReference type="HAMAP-Rule" id="MF_00175"/>
    </source>
</evidence>
<evidence type="ECO:0000255" key="2">
    <source>
        <dbReference type="PROSITE-ProRule" id="PRU01250"/>
    </source>
</evidence>
<dbReference type="EMBL" id="CP000031">
    <property type="protein sequence ID" value="AAV94308.2"/>
    <property type="molecule type" value="Genomic_DNA"/>
</dbReference>
<dbReference type="RefSeq" id="WP_030003187.1">
    <property type="nucleotide sequence ID" value="NC_003911.12"/>
</dbReference>
<dbReference type="SMR" id="Q5LUP9"/>
<dbReference type="STRING" id="246200.SPO1004"/>
<dbReference type="PaxDb" id="246200-SPO1004"/>
<dbReference type="KEGG" id="sil:SPO1004"/>
<dbReference type="eggNOG" id="COG1219">
    <property type="taxonomic scope" value="Bacteria"/>
</dbReference>
<dbReference type="HOGENOM" id="CLU_014218_8_2_5"/>
<dbReference type="OrthoDB" id="9804062at2"/>
<dbReference type="Proteomes" id="UP000001023">
    <property type="component" value="Chromosome"/>
</dbReference>
<dbReference type="GO" id="GO:0009376">
    <property type="term" value="C:HslUV protease complex"/>
    <property type="evidence" value="ECO:0007669"/>
    <property type="project" value="TreeGrafter"/>
</dbReference>
<dbReference type="GO" id="GO:0005524">
    <property type="term" value="F:ATP binding"/>
    <property type="evidence" value="ECO:0007669"/>
    <property type="project" value="UniProtKB-UniRule"/>
</dbReference>
<dbReference type="GO" id="GO:0016887">
    <property type="term" value="F:ATP hydrolysis activity"/>
    <property type="evidence" value="ECO:0007669"/>
    <property type="project" value="InterPro"/>
</dbReference>
<dbReference type="GO" id="GO:0140662">
    <property type="term" value="F:ATP-dependent protein folding chaperone"/>
    <property type="evidence" value="ECO:0007669"/>
    <property type="project" value="InterPro"/>
</dbReference>
<dbReference type="GO" id="GO:0046983">
    <property type="term" value="F:protein dimerization activity"/>
    <property type="evidence" value="ECO:0007669"/>
    <property type="project" value="InterPro"/>
</dbReference>
<dbReference type="GO" id="GO:0051082">
    <property type="term" value="F:unfolded protein binding"/>
    <property type="evidence" value="ECO:0007669"/>
    <property type="project" value="UniProtKB-UniRule"/>
</dbReference>
<dbReference type="GO" id="GO:0008270">
    <property type="term" value="F:zinc ion binding"/>
    <property type="evidence" value="ECO:0007669"/>
    <property type="project" value="InterPro"/>
</dbReference>
<dbReference type="GO" id="GO:0051301">
    <property type="term" value="P:cell division"/>
    <property type="evidence" value="ECO:0007669"/>
    <property type="project" value="TreeGrafter"/>
</dbReference>
<dbReference type="GO" id="GO:0051603">
    <property type="term" value="P:proteolysis involved in protein catabolic process"/>
    <property type="evidence" value="ECO:0007669"/>
    <property type="project" value="TreeGrafter"/>
</dbReference>
<dbReference type="CDD" id="cd19497">
    <property type="entry name" value="RecA-like_ClpX"/>
    <property type="match status" value="1"/>
</dbReference>
<dbReference type="FunFam" id="1.10.8.60:FF:000002">
    <property type="entry name" value="ATP-dependent Clp protease ATP-binding subunit ClpX"/>
    <property type="match status" value="1"/>
</dbReference>
<dbReference type="FunFam" id="3.40.50.300:FF:000005">
    <property type="entry name" value="ATP-dependent Clp protease ATP-binding subunit ClpX"/>
    <property type="match status" value="1"/>
</dbReference>
<dbReference type="Gene3D" id="1.10.8.60">
    <property type="match status" value="1"/>
</dbReference>
<dbReference type="Gene3D" id="6.20.220.10">
    <property type="entry name" value="ClpX chaperone, C4-type zinc finger domain"/>
    <property type="match status" value="1"/>
</dbReference>
<dbReference type="Gene3D" id="3.40.50.300">
    <property type="entry name" value="P-loop containing nucleotide triphosphate hydrolases"/>
    <property type="match status" value="1"/>
</dbReference>
<dbReference type="HAMAP" id="MF_00175">
    <property type="entry name" value="ClpX"/>
    <property type="match status" value="1"/>
</dbReference>
<dbReference type="InterPro" id="IPR003593">
    <property type="entry name" value="AAA+_ATPase"/>
</dbReference>
<dbReference type="InterPro" id="IPR050052">
    <property type="entry name" value="ATP-dep_Clp_protease_ClpX"/>
</dbReference>
<dbReference type="InterPro" id="IPR003959">
    <property type="entry name" value="ATPase_AAA_core"/>
</dbReference>
<dbReference type="InterPro" id="IPR019489">
    <property type="entry name" value="Clp_ATPase_C"/>
</dbReference>
<dbReference type="InterPro" id="IPR004487">
    <property type="entry name" value="Clp_protease_ATP-bd_su_ClpX"/>
</dbReference>
<dbReference type="InterPro" id="IPR046425">
    <property type="entry name" value="ClpX_bact"/>
</dbReference>
<dbReference type="InterPro" id="IPR027417">
    <property type="entry name" value="P-loop_NTPase"/>
</dbReference>
<dbReference type="InterPro" id="IPR010603">
    <property type="entry name" value="Znf_CppX_C4"/>
</dbReference>
<dbReference type="InterPro" id="IPR038366">
    <property type="entry name" value="Znf_CppX_C4_sf"/>
</dbReference>
<dbReference type="NCBIfam" id="TIGR00382">
    <property type="entry name" value="clpX"/>
    <property type="match status" value="1"/>
</dbReference>
<dbReference type="NCBIfam" id="NF003745">
    <property type="entry name" value="PRK05342.1"/>
    <property type="match status" value="1"/>
</dbReference>
<dbReference type="PANTHER" id="PTHR48102:SF7">
    <property type="entry name" value="ATP-DEPENDENT CLP PROTEASE ATP-BINDING SUBUNIT CLPX-LIKE, MITOCHONDRIAL"/>
    <property type="match status" value="1"/>
</dbReference>
<dbReference type="PANTHER" id="PTHR48102">
    <property type="entry name" value="ATP-DEPENDENT CLP PROTEASE ATP-BINDING SUBUNIT CLPX-LIKE, MITOCHONDRIAL-RELATED"/>
    <property type="match status" value="1"/>
</dbReference>
<dbReference type="Pfam" id="PF07724">
    <property type="entry name" value="AAA_2"/>
    <property type="match status" value="1"/>
</dbReference>
<dbReference type="Pfam" id="PF10431">
    <property type="entry name" value="ClpB_D2-small"/>
    <property type="match status" value="1"/>
</dbReference>
<dbReference type="Pfam" id="PF06689">
    <property type="entry name" value="zf-C4_ClpX"/>
    <property type="match status" value="1"/>
</dbReference>
<dbReference type="SMART" id="SM00382">
    <property type="entry name" value="AAA"/>
    <property type="match status" value="1"/>
</dbReference>
<dbReference type="SMART" id="SM01086">
    <property type="entry name" value="ClpB_D2-small"/>
    <property type="match status" value="1"/>
</dbReference>
<dbReference type="SMART" id="SM00994">
    <property type="entry name" value="zf-C4_ClpX"/>
    <property type="match status" value="1"/>
</dbReference>
<dbReference type="SUPFAM" id="SSF57716">
    <property type="entry name" value="Glucocorticoid receptor-like (DNA-binding domain)"/>
    <property type="match status" value="1"/>
</dbReference>
<dbReference type="SUPFAM" id="SSF52540">
    <property type="entry name" value="P-loop containing nucleoside triphosphate hydrolases"/>
    <property type="match status" value="1"/>
</dbReference>
<dbReference type="PROSITE" id="PS51902">
    <property type="entry name" value="CLPX_ZB"/>
    <property type="match status" value="1"/>
</dbReference>
<organism>
    <name type="scientific">Ruegeria pomeroyi (strain ATCC 700808 / DSM 15171 / DSS-3)</name>
    <name type="common">Silicibacter pomeroyi</name>
    <dbReference type="NCBI Taxonomy" id="246200"/>
    <lineage>
        <taxon>Bacteria</taxon>
        <taxon>Pseudomonadati</taxon>
        <taxon>Pseudomonadota</taxon>
        <taxon>Alphaproteobacteria</taxon>
        <taxon>Rhodobacterales</taxon>
        <taxon>Roseobacteraceae</taxon>
        <taxon>Ruegeria</taxon>
    </lineage>
</organism>
<comment type="function">
    <text evidence="1">ATP-dependent specificity component of the Clp protease. It directs the protease to specific substrates. Can perform chaperone functions in the absence of ClpP.</text>
</comment>
<comment type="subunit">
    <text evidence="1">Component of the ClpX-ClpP complex. Forms a hexameric ring that, in the presence of ATP, binds to fourteen ClpP subunits assembled into a disk-like structure with a central cavity, resembling the structure of eukaryotic proteasomes.</text>
</comment>
<comment type="similarity">
    <text evidence="1">Belongs to the ClpX chaperone family.</text>
</comment>
<accession>Q5LUP9</accession>
<proteinExistence type="inferred from homology"/>
<gene>
    <name evidence="1" type="primary">clpX</name>
    <name type="ordered locus">SPO1004</name>
</gene>